<keyword id="KW-0053">Apoptosis</keyword>
<keyword id="KW-0072">Autophagy</keyword>
<keyword id="KW-0106">Calcium</keyword>
<keyword id="KW-0256">Endoplasmic reticulum</keyword>
<keyword id="KW-1017">Isopeptide bond</keyword>
<keyword id="KW-0472">Membrane</keyword>
<keyword id="KW-1185">Reference proteome</keyword>
<keyword id="KW-0812">Transmembrane</keyword>
<keyword id="KW-1133">Transmembrane helix</keyword>
<keyword id="KW-0832">Ubl conjugation</keyword>
<keyword id="KW-0834">Unfolded protein response</keyword>
<accession>Q9D2C7</accession>
<accession>Q3TX81</accession>
<accession>Q8BFY4</accession>
<name>BI1_MOUSE</name>
<sequence length="237" mass="26478">MNIFDRKINFDALLKFSHITPSTQQHLKKVYASFALCMFVAAAGAYVHVVTHFIQAGLLSALGSLALMIWLMATPHSHETEQKRLGLLAGFAFLTGVGLGPALELCIAVNPSILPTAFMGTAMIFTCFSLSALYARRRSYLFLGGILMSAMSLMLLSSLGNLFFGSIWLFQANLYLGLLVMCGFVLFDTQLIIEKAEHGDKDYIWHCVDLFLDFVTLFRKLMLILAFNEKDKKKEKK</sequence>
<dbReference type="EMBL" id="AK019865">
    <property type="protein sequence ID" value="BAB31892.1"/>
    <property type="molecule type" value="mRNA"/>
</dbReference>
<dbReference type="EMBL" id="AK036782">
    <property type="protein sequence ID" value="BAC29575.1"/>
    <property type="molecule type" value="mRNA"/>
</dbReference>
<dbReference type="EMBL" id="AK036994">
    <property type="protein sequence ID" value="BAC29662.1"/>
    <property type="molecule type" value="mRNA"/>
</dbReference>
<dbReference type="EMBL" id="AK049604">
    <property type="protein sequence ID" value="BAC33837.1"/>
    <property type="molecule type" value="mRNA"/>
</dbReference>
<dbReference type="EMBL" id="AK050299">
    <property type="protein sequence ID" value="BAC34174.1"/>
    <property type="molecule type" value="mRNA"/>
</dbReference>
<dbReference type="EMBL" id="AK050323">
    <property type="protein sequence ID" value="BAC34188.1"/>
    <property type="molecule type" value="mRNA"/>
</dbReference>
<dbReference type="EMBL" id="AK088030">
    <property type="protein sequence ID" value="BAC40107.1"/>
    <property type="molecule type" value="mRNA"/>
</dbReference>
<dbReference type="EMBL" id="AK088683">
    <property type="protein sequence ID" value="BAC40503.1"/>
    <property type="molecule type" value="mRNA"/>
</dbReference>
<dbReference type="EMBL" id="AK139901">
    <property type="protein sequence ID" value="BAE24176.1"/>
    <property type="molecule type" value="mRNA"/>
</dbReference>
<dbReference type="EMBL" id="AK159380">
    <property type="protein sequence ID" value="BAE35035.1"/>
    <property type="molecule type" value="mRNA"/>
</dbReference>
<dbReference type="EMBL" id="AK166935">
    <property type="protein sequence ID" value="BAE39128.1"/>
    <property type="molecule type" value="mRNA"/>
</dbReference>
<dbReference type="EMBL" id="BC005588">
    <property type="protein sequence ID" value="AAH05588.1"/>
    <property type="molecule type" value="mRNA"/>
</dbReference>
<dbReference type="CCDS" id="CCDS37201.1"/>
<dbReference type="RefSeq" id="NP_001164505.1">
    <property type="nucleotide sequence ID" value="NM_001171034.1"/>
</dbReference>
<dbReference type="RefSeq" id="NP_001164506.1">
    <property type="nucleotide sequence ID" value="NM_001171035.1"/>
</dbReference>
<dbReference type="RefSeq" id="NP_001164507.1">
    <property type="nucleotide sequence ID" value="NM_001171036.1"/>
</dbReference>
<dbReference type="RefSeq" id="NP_080945.1">
    <property type="nucleotide sequence ID" value="NM_026669.4"/>
</dbReference>
<dbReference type="RefSeq" id="XP_036014961.1">
    <property type="nucleotide sequence ID" value="XM_036159068.1"/>
</dbReference>
<dbReference type="SMR" id="Q9D2C7"/>
<dbReference type="BioGRID" id="225393">
    <property type="interactions" value="4"/>
</dbReference>
<dbReference type="FunCoup" id="Q9D2C7">
    <property type="interactions" value="1456"/>
</dbReference>
<dbReference type="IntAct" id="Q9D2C7">
    <property type="interactions" value="1"/>
</dbReference>
<dbReference type="STRING" id="10090.ENSMUSP00000023749"/>
<dbReference type="iPTMnet" id="Q9D2C7"/>
<dbReference type="PhosphoSitePlus" id="Q9D2C7"/>
<dbReference type="SwissPalm" id="Q9D2C7"/>
<dbReference type="jPOST" id="Q9D2C7"/>
<dbReference type="PaxDb" id="10090-ENSMUSP00000023749"/>
<dbReference type="ProteomicsDB" id="273609"/>
<dbReference type="Pumba" id="Q9D2C7"/>
<dbReference type="Antibodypedia" id="26071">
    <property type="antibodies" value="221 antibodies from 25 providers"/>
</dbReference>
<dbReference type="DNASU" id="110213"/>
<dbReference type="Ensembl" id="ENSMUST00000023749.15">
    <property type="protein sequence ID" value="ENSMUSP00000023749.9"/>
    <property type="gene ID" value="ENSMUSG00000023010.16"/>
</dbReference>
<dbReference type="Ensembl" id="ENSMUST00000159209.8">
    <property type="protein sequence ID" value="ENSMUSP00000125117.2"/>
    <property type="gene ID" value="ENSMUSG00000023010.16"/>
</dbReference>
<dbReference type="Ensembl" id="ENSMUST00000159531.3">
    <property type="protein sequence ID" value="ENSMUSP00000125318.2"/>
    <property type="gene ID" value="ENSMUSG00000023010.16"/>
</dbReference>
<dbReference type="Ensembl" id="ENSMUST00000160635.8">
    <property type="protein sequence ID" value="ENSMUSP00000124651.2"/>
    <property type="gene ID" value="ENSMUSG00000023010.16"/>
</dbReference>
<dbReference type="Ensembl" id="ENSMUST00000161250.8">
    <property type="protein sequence ID" value="ENSMUSP00000125563.2"/>
    <property type="gene ID" value="ENSMUSG00000023010.16"/>
</dbReference>
<dbReference type="GeneID" id="110213"/>
<dbReference type="KEGG" id="mmu:110213"/>
<dbReference type="UCSC" id="uc007xpm.2">
    <property type="organism name" value="mouse"/>
</dbReference>
<dbReference type="AGR" id="MGI:99682"/>
<dbReference type="CTD" id="7009"/>
<dbReference type="MGI" id="MGI:99682">
    <property type="gene designation" value="Tmbim6"/>
</dbReference>
<dbReference type="VEuPathDB" id="HostDB:ENSMUSG00000023010"/>
<dbReference type="eggNOG" id="KOG1629">
    <property type="taxonomic scope" value="Eukaryota"/>
</dbReference>
<dbReference type="GeneTree" id="ENSGT01050000244940"/>
<dbReference type="HOGENOM" id="CLU_061277_0_1_1"/>
<dbReference type="InParanoid" id="Q9D2C7"/>
<dbReference type="OMA" id="SRDFIMH"/>
<dbReference type="OrthoDB" id="1277691at2759"/>
<dbReference type="PhylomeDB" id="Q9D2C7"/>
<dbReference type="TreeFam" id="TF323395"/>
<dbReference type="BioGRID-ORCS" id="110213">
    <property type="hits" value="4 hits in 76 CRISPR screens"/>
</dbReference>
<dbReference type="ChiTaRS" id="Tmbim6">
    <property type="organism name" value="mouse"/>
</dbReference>
<dbReference type="PRO" id="PR:Q9D2C7"/>
<dbReference type="Proteomes" id="UP000000589">
    <property type="component" value="Chromosome 15"/>
</dbReference>
<dbReference type="RNAct" id="Q9D2C7">
    <property type="molecule type" value="protein"/>
</dbReference>
<dbReference type="Bgee" id="ENSMUSG00000023010">
    <property type="expression patterns" value="Expressed in lacrimal gland and 251 other cell types or tissues"/>
</dbReference>
<dbReference type="ExpressionAtlas" id="Q9D2C7">
    <property type="expression patterns" value="baseline and differential"/>
</dbReference>
<dbReference type="GO" id="GO:0005789">
    <property type="term" value="C:endoplasmic reticulum membrane"/>
    <property type="evidence" value="ECO:0007669"/>
    <property type="project" value="UniProtKB-SubCell"/>
</dbReference>
<dbReference type="GO" id="GO:0060698">
    <property type="term" value="F:endoribonuclease inhibitor activity"/>
    <property type="evidence" value="ECO:0000315"/>
    <property type="project" value="ParkinsonsUK-UCL"/>
</dbReference>
<dbReference type="GO" id="GO:0019899">
    <property type="term" value="F:enzyme binding"/>
    <property type="evidence" value="ECO:0000353"/>
    <property type="project" value="ParkinsonsUK-UCL"/>
</dbReference>
<dbReference type="GO" id="GO:0031625">
    <property type="term" value="F:ubiquitin protein ligase binding"/>
    <property type="evidence" value="ECO:0007669"/>
    <property type="project" value="Ensembl"/>
</dbReference>
<dbReference type="GO" id="GO:0006914">
    <property type="term" value="P:autophagy"/>
    <property type="evidence" value="ECO:0007669"/>
    <property type="project" value="UniProtKB-KW"/>
</dbReference>
<dbReference type="GO" id="GO:0034620">
    <property type="term" value="P:cellular response to unfolded protein"/>
    <property type="evidence" value="ECO:0000315"/>
    <property type="project" value="ParkinsonsUK-UCL"/>
</dbReference>
<dbReference type="GO" id="GO:0032469">
    <property type="term" value="P:endoplasmic reticulum calcium ion homeostasis"/>
    <property type="evidence" value="ECO:0000314"/>
    <property type="project" value="MGI"/>
</dbReference>
<dbReference type="GO" id="GO:0070059">
    <property type="term" value="P:intrinsic apoptotic signaling pathway in response to endoplasmic reticulum stress"/>
    <property type="evidence" value="ECO:0000314"/>
    <property type="project" value="MGI"/>
</dbReference>
<dbReference type="GO" id="GO:0010523">
    <property type="term" value="P:negative regulation of calcium ion transport into cytosol"/>
    <property type="evidence" value="ECO:0000266"/>
    <property type="project" value="MGI"/>
</dbReference>
<dbReference type="GO" id="GO:1902236">
    <property type="term" value="P:negative regulation of endoplasmic reticulum stress-induced intrinsic apoptotic signaling pathway"/>
    <property type="evidence" value="ECO:0000316"/>
    <property type="project" value="MGI"/>
</dbReference>
<dbReference type="GO" id="GO:1903298">
    <property type="term" value="P:negative regulation of hypoxia-induced intrinsic apoptotic signaling pathway"/>
    <property type="evidence" value="ECO:0007669"/>
    <property type="project" value="Ensembl"/>
</dbReference>
<dbReference type="GO" id="GO:0002638">
    <property type="term" value="P:negative regulation of immunoglobulin production"/>
    <property type="evidence" value="ECO:0000315"/>
    <property type="project" value="ParkinsonsUK-UCL"/>
</dbReference>
<dbReference type="GO" id="GO:1903895">
    <property type="term" value="P:negative regulation of IRE1-mediated unfolded protein response"/>
    <property type="evidence" value="ECO:0007669"/>
    <property type="project" value="Ensembl"/>
</dbReference>
<dbReference type="GO" id="GO:0033119">
    <property type="term" value="P:negative regulation of RNA splicing"/>
    <property type="evidence" value="ECO:0000315"/>
    <property type="project" value="ParkinsonsUK-UCL"/>
</dbReference>
<dbReference type="GO" id="GO:0000122">
    <property type="term" value="P:negative regulation of transcription by RNA polymerase II"/>
    <property type="evidence" value="ECO:0000315"/>
    <property type="project" value="ParkinsonsUK-UCL"/>
</dbReference>
<dbReference type="GO" id="GO:0036483">
    <property type="term" value="P:neuron intrinsic apoptotic signaling pathway in response to endoplasmic reticulum stress"/>
    <property type="evidence" value="ECO:0000315"/>
    <property type="project" value="MGI"/>
</dbReference>
<dbReference type="GO" id="GO:0034976">
    <property type="term" value="P:response to endoplasmic reticulum stress"/>
    <property type="evidence" value="ECO:0000315"/>
    <property type="project" value="ParkinsonsUK-UCL"/>
</dbReference>
<dbReference type="GO" id="GO:1902065">
    <property type="term" value="P:response to L-glutamate"/>
    <property type="evidence" value="ECO:0007669"/>
    <property type="project" value="Ensembl"/>
</dbReference>
<dbReference type="CDD" id="cd10430">
    <property type="entry name" value="BI-1"/>
    <property type="match status" value="1"/>
</dbReference>
<dbReference type="InterPro" id="IPR006213">
    <property type="entry name" value="Bax_inhbtr1_CS"/>
</dbReference>
<dbReference type="InterPro" id="IPR006214">
    <property type="entry name" value="Bax_inhibitor_1-related"/>
</dbReference>
<dbReference type="PANTHER" id="PTHR23291:SF32">
    <property type="entry name" value="BAX INHIBITOR 1"/>
    <property type="match status" value="1"/>
</dbReference>
<dbReference type="PANTHER" id="PTHR23291">
    <property type="entry name" value="BAX INHIBITOR-RELATED"/>
    <property type="match status" value="1"/>
</dbReference>
<dbReference type="Pfam" id="PF01027">
    <property type="entry name" value="Bax1-I"/>
    <property type="match status" value="1"/>
</dbReference>
<dbReference type="PROSITE" id="PS01243">
    <property type="entry name" value="BI1"/>
    <property type="match status" value="1"/>
</dbReference>
<gene>
    <name type="primary">Tmbim6</name>
    <name type="synonym">Tegt</name>
</gene>
<comment type="function">
    <text evidence="1 3 4">Endoplasmic reticulum (ER)-resident protein that confers cellular protection as an anti-apoptotic protein by limiting multiple stress-inducing pathways surrounding the endoplasmic reticulum and mitochondria (PubMed:15304216). Inhibits the activities of the key sensor for the endoplasmic reticulum unfolded protein response IRE1alpha/ERN1 both directly and by blocking BAX/BAK binding. Modulates ER calcium homeostasis by acting as a calcium-leak channel (By similarity). Negatively regulates autophagy and autophagosome formation, especially during periods of nutrient deprivation, and reduces cell survival during starvation (PubMed:21926971).</text>
</comment>
<comment type="subunit">
    <text evidence="1 4">Interacts with BCL2 (By similarity). Interacts with BCL2L1 (PubMed:21926971). Interacts with ERN1 (By similarity).</text>
</comment>
<comment type="subcellular location">
    <subcellularLocation>
        <location evidence="1">Endoplasmic reticulum membrane</location>
        <topology evidence="1">Multi-pass membrane protein</topology>
    </subcellularLocation>
</comment>
<comment type="tissue specificity">
    <text evidence="5">Highly abundant in adult testis.</text>
</comment>
<comment type="domain">
    <text evidence="1">The intra-membrane loop at the C-terminus acts as a calcium pore, mediating calcium leak from the ER into the cytosol.</text>
</comment>
<comment type="PTM">
    <text evidence="1">Ubiquitinated by BFAR, leading to proteasomal degradation.</text>
</comment>
<comment type="disruption phenotype">
    <text evidence="3">Tmbim6-deficient mice are viable and develop normally although they exhibit increased vulnerability to tissue damage induced by stimuli that trigger ER stress.</text>
</comment>
<comment type="similarity">
    <text evidence="6">Belongs to the BI1 family.</text>
</comment>
<protein>
    <recommendedName>
        <fullName>Bax inhibitor 1</fullName>
        <shortName>BI-1</shortName>
    </recommendedName>
    <alternativeName>
        <fullName>Testis-enhanced gene transcript protein</fullName>
    </alternativeName>
    <alternativeName>
        <fullName>Transmembrane BAX inhibitor motif-containing protein 6</fullName>
    </alternativeName>
</protein>
<evidence type="ECO:0000250" key="1">
    <source>
        <dbReference type="UniProtKB" id="P55061"/>
    </source>
</evidence>
<evidence type="ECO:0000255" key="2"/>
<evidence type="ECO:0000269" key="3">
    <source>
    </source>
</evidence>
<evidence type="ECO:0000269" key="4">
    <source>
    </source>
</evidence>
<evidence type="ECO:0000269" key="5">
    <source>
    </source>
</evidence>
<evidence type="ECO:0000305" key="6"/>
<feature type="chain" id="PRO_0000179079" description="Bax inhibitor 1">
    <location>
        <begin position="1"/>
        <end position="237"/>
    </location>
</feature>
<feature type="topological domain" description="Cytoplasmic" evidence="2">
    <location>
        <begin position="1"/>
        <end position="29"/>
    </location>
</feature>
<feature type="transmembrane region" description="Helical" evidence="2">
    <location>
        <begin position="30"/>
        <end position="50"/>
    </location>
</feature>
<feature type="topological domain" description="Lumenal" evidence="2">
    <location>
        <begin position="51"/>
        <end position="52"/>
    </location>
</feature>
<feature type="transmembrane region" description="Helical" evidence="2">
    <location>
        <begin position="53"/>
        <end position="73"/>
    </location>
</feature>
<feature type="topological domain" description="Cytoplasmic" evidence="2">
    <location>
        <begin position="74"/>
        <end position="86"/>
    </location>
</feature>
<feature type="transmembrane region" description="Helical" evidence="2">
    <location>
        <begin position="87"/>
        <end position="107"/>
    </location>
</feature>
<feature type="topological domain" description="Lumenal" evidence="2">
    <location>
        <begin position="108"/>
        <end position="112"/>
    </location>
</feature>
<feature type="transmembrane region" description="Helical" evidence="2">
    <location>
        <begin position="113"/>
        <end position="133"/>
    </location>
</feature>
<feature type="topological domain" description="Cytoplasmic" evidence="2">
    <location>
        <begin position="134"/>
        <end position="139"/>
    </location>
</feature>
<feature type="transmembrane region" description="Helical" evidence="2">
    <location>
        <begin position="140"/>
        <end position="160"/>
    </location>
</feature>
<feature type="topological domain" description="Lumenal" evidence="2">
    <location>
        <begin position="161"/>
        <end position="166"/>
    </location>
</feature>
<feature type="transmembrane region" description="Helical" evidence="2">
    <location>
        <begin position="167"/>
        <end position="187"/>
    </location>
</feature>
<feature type="topological domain" description="Cytoplasmic" evidence="2">
    <location>
        <begin position="188"/>
        <end position="206"/>
    </location>
</feature>
<feature type="intramembrane region" description="Helical" evidence="2">
    <location>
        <begin position="207"/>
        <end position="227"/>
    </location>
</feature>
<feature type="topological domain" description="Cytoplasmic" evidence="2">
    <location>
        <begin position="228"/>
        <end position="237"/>
    </location>
</feature>
<feature type="cross-link" description="Glycyl lysine isopeptide (Lys-Gly) (interchain with G-Cter in ubiquitin)" evidence="1">
    <location>
        <position position="7"/>
    </location>
</feature>
<feature type="sequence conflict" description="In Ref. 1; BAC29575/BAC29662." evidence="6" ref="1">
    <original>F</original>
    <variation>Y</variation>
    <location>
        <position position="93"/>
    </location>
</feature>
<proteinExistence type="evidence at protein level"/>
<reference key="1">
    <citation type="journal article" date="2005" name="Science">
        <title>The transcriptional landscape of the mammalian genome.</title>
        <authorList>
            <person name="Carninci P."/>
            <person name="Kasukawa T."/>
            <person name="Katayama S."/>
            <person name="Gough J."/>
            <person name="Frith M.C."/>
            <person name="Maeda N."/>
            <person name="Oyama R."/>
            <person name="Ravasi T."/>
            <person name="Lenhard B."/>
            <person name="Wells C."/>
            <person name="Kodzius R."/>
            <person name="Shimokawa K."/>
            <person name="Bajic V.B."/>
            <person name="Brenner S.E."/>
            <person name="Batalov S."/>
            <person name="Forrest A.R."/>
            <person name="Zavolan M."/>
            <person name="Davis M.J."/>
            <person name="Wilming L.G."/>
            <person name="Aidinis V."/>
            <person name="Allen J.E."/>
            <person name="Ambesi-Impiombato A."/>
            <person name="Apweiler R."/>
            <person name="Aturaliya R.N."/>
            <person name="Bailey T.L."/>
            <person name="Bansal M."/>
            <person name="Baxter L."/>
            <person name="Beisel K.W."/>
            <person name="Bersano T."/>
            <person name="Bono H."/>
            <person name="Chalk A.M."/>
            <person name="Chiu K.P."/>
            <person name="Choudhary V."/>
            <person name="Christoffels A."/>
            <person name="Clutterbuck D.R."/>
            <person name="Crowe M.L."/>
            <person name="Dalla E."/>
            <person name="Dalrymple B.P."/>
            <person name="de Bono B."/>
            <person name="Della Gatta G."/>
            <person name="di Bernardo D."/>
            <person name="Down T."/>
            <person name="Engstrom P."/>
            <person name="Fagiolini M."/>
            <person name="Faulkner G."/>
            <person name="Fletcher C.F."/>
            <person name="Fukushima T."/>
            <person name="Furuno M."/>
            <person name="Futaki S."/>
            <person name="Gariboldi M."/>
            <person name="Georgii-Hemming P."/>
            <person name="Gingeras T.R."/>
            <person name="Gojobori T."/>
            <person name="Green R.E."/>
            <person name="Gustincich S."/>
            <person name="Harbers M."/>
            <person name="Hayashi Y."/>
            <person name="Hensch T.K."/>
            <person name="Hirokawa N."/>
            <person name="Hill D."/>
            <person name="Huminiecki L."/>
            <person name="Iacono M."/>
            <person name="Ikeo K."/>
            <person name="Iwama A."/>
            <person name="Ishikawa T."/>
            <person name="Jakt M."/>
            <person name="Kanapin A."/>
            <person name="Katoh M."/>
            <person name="Kawasawa Y."/>
            <person name="Kelso J."/>
            <person name="Kitamura H."/>
            <person name="Kitano H."/>
            <person name="Kollias G."/>
            <person name="Krishnan S.P."/>
            <person name="Kruger A."/>
            <person name="Kummerfeld S.K."/>
            <person name="Kurochkin I.V."/>
            <person name="Lareau L.F."/>
            <person name="Lazarevic D."/>
            <person name="Lipovich L."/>
            <person name="Liu J."/>
            <person name="Liuni S."/>
            <person name="McWilliam S."/>
            <person name="Madan Babu M."/>
            <person name="Madera M."/>
            <person name="Marchionni L."/>
            <person name="Matsuda H."/>
            <person name="Matsuzawa S."/>
            <person name="Miki H."/>
            <person name="Mignone F."/>
            <person name="Miyake S."/>
            <person name="Morris K."/>
            <person name="Mottagui-Tabar S."/>
            <person name="Mulder N."/>
            <person name="Nakano N."/>
            <person name="Nakauchi H."/>
            <person name="Ng P."/>
            <person name="Nilsson R."/>
            <person name="Nishiguchi S."/>
            <person name="Nishikawa S."/>
            <person name="Nori F."/>
            <person name="Ohara O."/>
            <person name="Okazaki Y."/>
            <person name="Orlando V."/>
            <person name="Pang K.C."/>
            <person name="Pavan W.J."/>
            <person name="Pavesi G."/>
            <person name="Pesole G."/>
            <person name="Petrovsky N."/>
            <person name="Piazza S."/>
            <person name="Reed J."/>
            <person name="Reid J.F."/>
            <person name="Ring B.Z."/>
            <person name="Ringwald M."/>
            <person name="Rost B."/>
            <person name="Ruan Y."/>
            <person name="Salzberg S.L."/>
            <person name="Sandelin A."/>
            <person name="Schneider C."/>
            <person name="Schoenbach C."/>
            <person name="Sekiguchi K."/>
            <person name="Semple C.A."/>
            <person name="Seno S."/>
            <person name="Sessa L."/>
            <person name="Sheng Y."/>
            <person name="Shibata Y."/>
            <person name="Shimada H."/>
            <person name="Shimada K."/>
            <person name="Silva D."/>
            <person name="Sinclair B."/>
            <person name="Sperling S."/>
            <person name="Stupka E."/>
            <person name="Sugiura K."/>
            <person name="Sultana R."/>
            <person name="Takenaka Y."/>
            <person name="Taki K."/>
            <person name="Tammoja K."/>
            <person name="Tan S.L."/>
            <person name="Tang S."/>
            <person name="Taylor M.S."/>
            <person name="Tegner J."/>
            <person name="Teichmann S.A."/>
            <person name="Ueda H.R."/>
            <person name="van Nimwegen E."/>
            <person name="Verardo R."/>
            <person name="Wei C.L."/>
            <person name="Yagi K."/>
            <person name="Yamanishi H."/>
            <person name="Zabarovsky E."/>
            <person name="Zhu S."/>
            <person name="Zimmer A."/>
            <person name="Hide W."/>
            <person name="Bult C."/>
            <person name="Grimmond S.M."/>
            <person name="Teasdale R.D."/>
            <person name="Liu E.T."/>
            <person name="Brusic V."/>
            <person name="Quackenbush J."/>
            <person name="Wahlestedt C."/>
            <person name="Mattick J.S."/>
            <person name="Hume D.A."/>
            <person name="Kai C."/>
            <person name="Sasaki D."/>
            <person name="Tomaru Y."/>
            <person name="Fukuda S."/>
            <person name="Kanamori-Katayama M."/>
            <person name="Suzuki M."/>
            <person name="Aoki J."/>
            <person name="Arakawa T."/>
            <person name="Iida J."/>
            <person name="Imamura K."/>
            <person name="Itoh M."/>
            <person name="Kato T."/>
            <person name="Kawaji H."/>
            <person name="Kawagashira N."/>
            <person name="Kawashima T."/>
            <person name="Kojima M."/>
            <person name="Kondo S."/>
            <person name="Konno H."/>
            <person name="Nakano K."/>
            <person name="Ninomiya N."/>
            <person name="Nishio T."/>
            <person name="Okada M."/>
            <person name="Plessy C."/>
            <person name="Shibata K."/>
            <person name="Shiraki T."/>
            <person name="Suzuki S."/>
            <person name="Tagami M."/>
            <person name="Waki K."/>
            <person name="Watahiki A."/>
            <person name="Okamura-Oho Y."/>
            <person name="Suzuki H."/>
            <person name="Kawai J."/>
            <person name="Hayashizaki Y."/>
        </authorList>
    </citation>
    <scope>NUCLEOTIDE SEQUENCE [LARGE SCALE MRNA]</scope>
    <source>
        <strain>C57BL/6J</strain>
        <strain>NOD</strain>
        <tissue>Egg</tissue>
        <tissue>Liver</tissue>
        <tissue>Ovary</tissue>
        <tissue>Spinal cord</tissue>
        <tissue>Thymus</tissue>
        <tissue>Uterus</tissue>
    </source>
</reference>
<reference key="2">
    <citation type="journal article" date="2004" name="Genome Res.">
        <title>The status, quality, and expansion of the NIH full-length cDNA project: the Mammalian Gene Collection (MGC).</title>
        <authorList>
            <consortium name="The MGC Project Team"/>
        </authorList>
    </citation>
    <scope>NUCLEOTIDE SEQUENCE [LARGE SCALE MRNA]</scope>
    <source>
        <strain>FVB/N</strain>
        <tissue>Mammary tumor</tissue>
    </source>
</reference>
<reference key="3">
    <citation type="journal article" date="1994" name="Mamm. Genome">
        <title>A novel, conserved gene of the rat that is developmentally regulated in the testis.</title>
        <authorList>
            <person name="Walter L."/>
            <person name="Dirks B."/>
            <person name="Rothermel E."/>
            <person name="Heyens M."/>
            <person name="Szpirer C."/>
            <person name="Levan G."/>
            <person name="Guenther E."/>
        </authorList>
    </citation>
    <scope>TISSUE SPECIFICITY</scope>
</reference>
<reference key="4">
    <citation type="journal article" date="2004" name="Mol. Cell">
        <title>BI-1 regulates an apoptosis pathway linked to endoplasmic reticulum stress.</title>
        <authorList>
            <person name="Chae H.J."/>
            <person name="Kim H.R."/>
            <person name="Xu C."/>
            <person name="Bailly-Maitre B."/>
            <person name="Krajewska M."/>
            <person name="Krajewski S."/>
            <person name="Banares S."/>
            <person name="Cui J."/>
            <person name="Digicaylioglu M."/>
            <person name="Ke N."/>
            <person name="Kitada S."/>
            <person name="Monosov E."/>
            <person name="Thomas M."/>
            <person name="Kress C.L."/>
            <person name="Babendure J.R."/>
            <person name="Tsien R.Y."/>
            <person name="Lipton S.A."/>
            <person name="Reed J.C."/>
        </authorList>
    </citation>
    <scope>FUNCTION</scope>
    <scope>DISRUPTION PHENOTYPE</scope>
</reference>
<reference key="5">
    <citation type="journal article" date="2010" name="Cell">
        <title>A tissue-specific atlas of mouse protein phosphorylation and expression.</title>
        <authorList>
            <person name="Huttlin E.L."/>
            <person name="Jedrychowski M.P."/>
            <person name="Elias J.E."/>
            <person name="Goswami T."/>
            <person name="Rad R."/>
            <person name="Beausoleil S.A."/>
            <person name="Villen J."/>
            <person name="Haas W."/>
            <person name="Sowa M.E."/>
            <person name="Gygi S.P."/>
        </authorList>
    </citation>
    <scope>IDENTIFICATION BY MASS SPECTROMETRY [LARGE SCALE ANALYSIS]</scope>
    <source>
        <tissue>Liver</tissue>
    </source>
</reference>
<reference key="6">
    <citation type="journal article" date="2011" name="EMBO J.">
        <title>BAX inhibitor-1 regulates autophagy by controlling the IRE1alpha branch of the unfolded protein response.</title>
        <authorList>
            <person name="Castillo K."/>
            <person name="Rojas-Rivera D."/>
            <person name="Lisbona F."/>
            <person name="Caballero B."/>
            <person name="Nassif M."/>
            <person name="Court F.A."/>
            <person name="Schuck S."/>
            <person name="Ibar C."/>
            <person name="Walter P."/>
            <person name="Sierralta J."/>
            <person name="Glavic A."/>
            <person name="Hetz C."/>
        </authorList>
    </citation>
    <scope>FUNCTION</scope>
    <scope>INTERACTION WITH BCL2L1</scope>
</reference>
<organism>
    <name type="scientific">Mus musculus</name>
    <name type="common">Mouse</name>
    <dbReference type="NCBI Taxonomy" id="10090"/>
    <lineage>
        <taxon>Eukaryota</taxon>
        <taxon>Metazoa</taxon>
        <taxon>Chordata</taxon>
        <taxon>Craniata</taxon>
        <taxon>Vertebrata</taxon>
        <taxon>Euteleostomi</taxon>
        <taxon>Mammalia</taxon>
        <taxon>Eutheria</taxon>
        <taxon>Euarchontoglires</taxon>
        <taxon>Glires</taxon>
        <taxon>Rodentia</taxon>
        <taxon>Myomorpha</taxon>
        <taxon>Muroidea</taxon>
        <taxon>Muridae</taxon>
        <taxon>Murinae</taxon>
        <taxon>Mus</taxon>
        <taxon>Mus</taxon>
    </lineage>
</organism>